<evidence type="ECO:0000250" key="1">
    <source>
        <dbReference type="UniProtKB" id="Q8N138"/>
    </source>
</evidence>
<evidence type="ECO:0000255" key="2"/>
<evidence type="ECO:0000305" key="3"/>
<gene>
    <name type="primary">Ormdl3</name>
</gene>
<organism>
    <name type="scientific">Rattus norvegicus</name>
    <name type="common">Rat</name>
    <dbReference type="NCBI Taxonomy" id="10116"/>
    <lineage>
        <taxon>Eukaryota</taxon>
        <taxon>Metazoa</taxon>
        <taxon>Chordata</taxon>
        <taxon>Craniata</taxon>
        <taxon>Vertebrata</taxon>
        <taxon>Euteleostomi</taxon>
        <taxon>Mammalia</taxon>
        <taxon>Eutheria</taxon>
        <taxon>Euarchontoglires</taxon>
        <taxon>Glires</taxon>
        <taxon>Rodentia</taxon>
        <taxon>Myomorpha</taxon>
        <taxon>Muroidea</taxon>
        <taxon>Muridae</taxon>
        <taxon>Murinae</taxon>
        <taxon>Rattus</taxon>
    </lineage>
</organism>
<proteinExistence type="evidence at transcript level"/>
<name>ORML3_RAT</name>
<keyword id="KW-0256">Endoplasmic reticulum</keyword>
<keyword id="KW-0379">Hydroxylation</keyword>
<keyword id="KW-0472">Membrane</keyword>
<keyword id="KW-1185">Reference proteome</keyword>
<keyword id="KW-0812">Transmembrane</keyword>
<keyword id="KW-1133">Transmembrane helix</keyword>
<keyword id="KW-0832">Ubl conjugation</keyword>
<protein>
    <recommendedName>
        <fullName>ORM1-like protein 3</fullName>
    </recommendedName>
    <alternativeName>
        <fullName>Liver regeneration-related protein LRRGT00183</fullName>
    </alternativeName>
</protein>
<accession>Q6QI25</accession>
<dbReference type="EMBL" id="AY539934">
    <property type="protein sequence ID" value="AAS66274.1"/>
    <property type="status" value="ALT_INIT"/>
    <property type="molecule type" value="mRNA"/>
</dbReference>
<dbReference type="RefSeq" id="NP_001041362.1">
    <property type="nucleotide sequence ID" value="NM_001047897.1"/>
</dbReference>
<dbReference type="RefSeq" id="NP_001400222.1">
    <property type="nucleotide sequence ID" value="NM_001413293.1"/>
</dbReference>
<dbReference type="RefSeq" id="NP_001400223.1">
    <property type="nucleotide sequence ID" value="NM_001413294.1"/>
</dbReference>
<dbReference type="RefSeq" id="XP_006247407.1">
    <property type="nucleotide sequence ID" value="XM_006247345.1"/>
</dbReference>
<dbReference type="RefSeq" id="XP_006247408.1">
    <property type="nucleotide sequence ID" value="XM_006247346.1"/>
</dbReference>
<dbReference type="RefSeq" id="XP_063125492.1">
    <property type="nucleotide sequence ID" value="XM_063269422.1"/>
</dbReference>
<dbReference type="RefSeq" id="XP_063125493.1">
    <property type="nucleotide sequence ID" value="XM_063269423.1"/>
</dbReference>
<dbReference type="SMR" id="Q6QI25"/>
<dbReference type="FunCoup" id="Q6QI25">
    <property type="interactions" value="1059"/>
</dbReference>
<dbReference type="STRING" id="10116.ENSRNOP00000046432"/>
<dbReference type="PhosphoSitePlus" id="Q6QI25"/>
<dbReference type="PaxDb" id="10116-ENSRNOP00000046432"/>
<dbReference type="GeneID" id="360618"/>
<dbReference type="UCSC" id="RGD:1560577">
    <property type="organism name" value="rat"/>
</dbReference>
<dbReference type="AGR" id="RGD:1560577"/>
<dbReference type="RGD" id="1560577">
    <property type="gene designation" value="Ormdl3"/>
</dbReference>
<dbReference type="eggNOG" id="KOG3319">
    <property type="taxonomic scope" value="Eukaryota"/>
</dbReference>
<dbReference type="InParanoid" id="Q6QI25"/>
<dbReference type="PhylomeDB" id="Q6QI25"/>
<dbReference type="TreeFam" id="TF323369"/>
<dbReference type="Reactome" id="R-RNO-1660661">
    <property type="pathway name" value="Sphingolipid de novo biosynthesis"/>
</dbReference>
<dbReference type="Reactome" id="R-RNO-6798695">
    <property type="pathway name" value="Neutrophil degranulation"/>
</dbReference>
<dbReference type="PRO" id="PR:Q6QI25"/>
<dbReference type="Proteomes" id="UP000002494">
    <property type="component" value="Unplaced"/>
</dbReference>
<dbReference type="GO" id="GO:0005783">
    <property type="term" value="C:endoplasmic reticulum"/>
    <property type="evidence" value="ECO:0000250"/>
    <property type="project" value="UniProtKB"/>
</dbReference>
<dbReference type="GO" id="GO:0005789">
    <property type="term" value="C:endoplasmic reticulum membrane"/>
    <property type="evidence" value="ECO:0007669"/>
    <property type="project" value="UniProtKB-SubCell"/>
</dbReference>
<dbReference type="GO" id="GO:0017059">
    <property type="term" value="C:serine palmitoyltransferase complex"/>
    <property type="evidence" value="ECO:0000250"/>
    <property type="project" value="UniProtKB"/>
</dbReference>
<dbReference type="GO" id="GO:0006672">
    <property type="term" value="P:ceramide metabolic process"/>
    <property type="evidence" value="ECO:0000250"/>
    <property type="project" value="UniProtKB"/>
</dbReference>
<dbReference type="GO" id="GO:0090156">
    <property type="term" value="P:intracellular sphingolipid homeostasis"/>
    <property type="evidence" value="ECO:0000318"/>
    <property type="project" value="GO_Central"/>
</dbReference>
<dbReference type="GO" id="GO:0061744">
    <property type="term" value="P:motor behavior"/>
    <property type="evidence" value="ECO:0000266"/>
    <property type="project" value="RGD"/>
</dbReference>
<dbReference type="GO" id="GO:0042552">
    <property type="term" value="P:myelination"/>
    <property type="evidence" value="ECO:0000266"/>
    <property type="project" value="RGD"/>
</dbReference>
<dbReference type="GO" id="GO:0002903">
    <property type="term" value="P:negative regulation of B cell apoptotic process"/>
    <property type="evidence" value="ECO:0000266"/>
    <property type="project" value="RGD"/>
</dbReference>
<dbReference type="GO" id="GO:1900060">
    <property type="term" value="P:negative regulation of ceramide biosynthetic process"/>
    <property type="evidence" value="ECO:0000266"/>
    <property type="project" value="RGD"/>
</dbReference>
<dbReference type="GO" id="GO:0010508">
    <property type="term" value="P:positive regulation of autophagy"/>
    <property type="evidence" value="ECO:0000266"/>
    <property type="project" value="RGD"/>
</dbReference>
<dbReference type="GO" id="GO:1900182">
    <property type="term" value="P:positive regulation of protein localization to nucleus"/>
    <property type="evidence" value="ECO:0000266"/>
    <property type="project" value="RGD"/>
</dbReference>
<dbReference type="GO" id="GO:2000303">
    <property type="term" value="P:regulation of ceramide biosynthetic process"/>
    <property type="evidence" value="ECO:0000266"/>
    <property type="project" value="RGD"/>
</dbReference>
<dbReference type="GO" id="GO:0006940">
    <property type="term" value="P:regulation of smooth muscle contraction"/>
    <property type="evidence" value="ECO:0000266"/>
    <property type="project" value="RGD"/>
</dbReference>
<dbReference type="GO" id="GO:0090153">
    <property type="term" value="P:regulation of sphingolipid biosynthetic process"/>
    <property type="evidence" value="ECO:0000266"/>
    <property type="project" value="RGD"/>
</dbReference>
<dbReference type="GO" id="GO:0030148">
    <property type="term" value="P:sphingolipid biosynthetic process"/>
    <property type="evidence" value="ECO:0000318"/>
    <property type="project" value="GO_Central"/>
</dbReference>
<dbReference type="GO" id="GO:0006686">
    <property type="term" value="P:sphingomyelin biosynthetic process"/>
    <property type="evidence" value="ECO:0000266"/>
    <property type="project" value="RGD"/>
</dbReference>
<dbReference type="InterPro" id="IPR007203">
    <property type="entry name" value="ORMDL"/>
</dbReference>
<dbReference type="PANTHER" id="PTHR12665">
    <property type="entry name" value="ORMDL PROTEINS"/>
    <property type="match status" value="1"/>
</dbReference>
<dbReference type="Pfam" id="PF04061">
    <property type="entry name" value="ORMDL"/>
    <property type="match status" value="1"/>
</dbReference>
<dbReference type="PIRSF" id="PIRSF018147">
    <property type="entry name" value="ORMDL"/>
    <property type="match status" value="1"/>
</dbReference>
<comment type="function">
    <text evidence="1">Plays an essential role in the homeostatic regulation of sphingolipid de novo biosynthesis by modulating the activity of the serine palmitoyltransferase (SPT) in response to ceramide levels. When complexed to SPT, the binding of ceramides to its N-terminus stabilizes a conformation that block SPT substrate entry, hence preventing SPT catalytic activity. Through this mechanism, maintains ceramide levels at sufficient concentrations for the production of complex sphingolipids, but which prevents the accumulation of ceramides to levels that trigger apoptosis.</text>
</comment>
<comment type="subunit">
    <text evidence="1">Ceramide-sensitive subunit of the serine palmitoyltransferase (SPT) complex, which is also composed of SPTLC1, SPTLC2/3 and SPTSSA/B.</text>
</comment>
<comment type="subcellular location">
    <subcellularLocation>
        <location evidence="1">Endoplasmic reticulum membrane</location>
        <topology evidence="1">Multi-pass membrane protein</topology>
    </subcellularLocation>
</comment>
<comment type="domain">
    <text evidence="1">Ceramides bind to ORMDL3 N-terminus and stabilize it in a conformation that physically restricts the accessibility of the substrates to their binding sites in the serine palmitoyltransferase (SPT) complex, hence inhibiting SPT catalytic activity. In the absence of ceramides, the N-terminus is flexible and permits substrate binding, thus liberating SPT from inhibition.</text>
</comment>
<comment type="PTM">
    <text evidence="1">When hydroxylated at Pro-137, ubiquitinated via 'Lys-48'-linkage, leading to proteasomal degradation. In endothelial cells, ORMDL3 proteasomal degradation is controlled by the sphingosine 1-phosphate receptor signaling pathway.</text>
</comment>
<comment type="similarity">
    <text evidence="3">Belongs to the ORM family.</text>
</comment>
<comment type="sequence caution" evidence="3">
    <conflict type="erroneous initiation">
        <sequence resource="EMBL-CDS" id="AAS66274"/>
    </conflict>
    <text>Extended N-terminus.</text>
</comment>
<feature type="chain" id="PRO_0000215642" description="ORM1-like protein 3">
    <location>
        <begin position="1"/>
        <end position="153"/>
    </location>
</feature>
<feature type="topological domain" description="Cytoplasmic" evidence="1 2">
    <location>
        <begin position="1"/>
        <end position="21"/>
    </location>
</feature>
<feature type="transmembrane region" description="Helical" evidence="1 2">
    <location>
        <begin position="22"/>
        <end position="42"/>
    </location>
</feature>
<feature type="transmembrane region" description="Helical" evidence="1 2">
    <location>
        <begin position="43"/>
        <end position="63"/>
    </location>
</feature>
<feature type="topological domain" description="Cytoplasmic" evidence="1 2">
    <location>
        <begin position="64"/>
        <end position="94"/>
    </location>
</feature>
<feature type="transmembrane region" description="Helical" evidence="1 2">
    <location>
        <begin position="95"/>
        <end position="117"/>
    </location>
</feature>
<feature type="topological domain" description="Extracellular" evidence="1 2">
    <location>
        <begin position="118"/>
        <end position="121"/>
    </location>
</feature>
<feature type="transmembrane region" description="Helical" evidence="1 2">
    <location>
        <begin position="122"/>
        <end position="142"/>
    </location>
</feature>
<feature type="topological domain" description="Cytoplasmic" evidence="1 2">
    <location>
        <begin position="143"/>
        <end position="153"/>
    </location>
</feature>
<feature type="region of interest" description="Important for ceramide level-sensing" evidence="1">
    <location>
        <begin position="1"/>
        <end position="17"/>
    </location>
</feature>
<feature type="modified residue" description="Hydroxyproline" evidence="1">
    <location>
        <position position="137"/>
    </location>
</feature>
<reference key="1">
    <citation type="submission" date="2004-02" db="EMBL/GenBank/DDBJ databases">
        <title>Liver regeneration after PH.</title>
        <authorList>
            <person name="Xu C.S."/>
            <person name="Zhang L."/>
            <person name="Chang C.F."/>
            <person name="Han H.P."/>
            <person name="Wang G.P."/>
            <person name="Chai L.Q."/>
            <person name="Yuan J.Y."/>
            <person name="Yang K.J."/>
            <person name="Zhao L.F."/>
            <person name="Ma H."/>
            <person name="Wang L."/>
            <person name="Wang S.F."/>
            <person name="Xing X.K."/>
            <person name="Shen G.M."/>
            <person name="Shi J.B."/>
            <person name="Rahman S."/>
            <person name="Wang Q.N."/>
            <person name="Zhang J.B."/>
        </authorList>
    </citation>
    <scope>NUCLEOTIDE SEQUENCE [LARGE SCALE MRNA]</scope>
    <source>
        <tissue>Liver</tissue>
    </source>
</reference>
<sequence length="153" mass="17463">MNVGTAHSEVNPNTRVMNSRGIWLSYVLAIGLLHVVLLSIPFVSVPVVWTLTNLIHNLGMYIFLHTVKGTPFETPDQGKARLLTHWEQMDYGVQFTASRKFLTITPIVLYFLTSFYTKYDQVHFILNTVSLMSVLIPKLPQLHGVRIFGINKY</sequence>